<accession>B2SQR5</accession>
<comment type="function">
    <text evidence="1">This protein binds specifically to 23S rRNA; its binding is stimulated by other ribosomal proteins, e.g. L4, L17, and L20. It is important during the early stages of 50S assembly. It makes multiple contacts with different domains of the 23S rRNA in the assembled 50S subunit and ribosome (By similarity).</text>
</comment>
<comment type="function">
    <text evidence="1">The globular domain of the protein is located near the polypeptide exit tunnel on the outside of the subunit, while an extended beta-hairpin is found that lines the wall of the exit tunnel in the center of the 70S ribosome.</text>
</comment>
<comment type="subunit">
    <text evidence="1">Part of the 50S ribosomal subunit.</text>
</comment>
<comment type="similarity">
    <text evidence="1">Belongs to the universal ribosomal protein uL22 family.</text>
</comment>
<protein>
    <recommendedName>
        <fullName evidence="1">Large ribosomal subunit protein uL22</fullName>
    </recommendedName>
    <alternativeName>
        <fullName evidence="2">50S ribosomal protein L22</fullName>
    </alternativeName>
</protein>
<name>RL22_XANOP</name>
<feature type="chain" id="PRO_1000142328" description="Large ribosomal subunit protein uL22">
    <location>
        <begin position="1"/>
        <end position="111"/>
    </location>
</feature>
<sequence length="111" mass="12087">MEAKAILRTARISPQKARLVADQVRGLSAERAVNLLKFSDKKAAHLIKKVVESAIANAENNQGADVDELKVKTIMVDEGPSLKRFMARAKGRGTRILKRTSHITVIVGAAK</sequence>
<proteinExistence type="inferred from homology"/>
<gene>
    <name evidence="1" type="primary">rplV</name>
    <name type="ordered locus">PXO_04516</name>
</gene>
<keyword id="KW-0687">Ribonucleoprotein</keyword>
<keyword id="KW-0689">Ribosomal protein</keyword>
<keyword id="KW-0694">RNA-binding</keyword>
<keyword id="KW-0699">rRNA-binding</keyword>
<evidence type="ECO:0000255" key="1">
    <source>
        <dbReference type="HAMAP-Rule" id="MF_01331"/>
    </source>
</evidence>
<evidence type="ECO:0000305" key="2"/>
<dbReference type="EMBL" id="CP000967">
    <property type="protein sequence ID" value="ACD57892.1"/>
    <property type="molecule type" value="Genomic_DNA"/>
</dbReference>
<dbReference type="RefSeq" id="WP_002811686.1">
    <property type="nucleotide sequence ID" value="NC_010717.2"/>
</dbReference>
<dbReference type="SMR" id="B2SQR5"/>
<dbReference type="GeneID" id="97210509"/>
<dbReference type="KEGG" id="xop:PXO_04516"/>
<dbReference type="eggNOG" id="COG0091">
    <property type="taxonomic scope" value="Bacteria"/>
</dbReference>
<dbReference type="HOGENOM" id="CLU_083987_3_3_6"/>
<dbReference type="Proteomes" id="UP000001740">
    <property type="component" value="Chromosome"/>
</dbReference>
<dbReference type="GO" id="GO:0022625">
    <property type="term" value="C:cytosolic large ribosomal subunit"/>
    <property type="evidence" value="ECO:0007669"/>
    <property type="project" value="TreeGrafter"/>
</dbReference>
<dbReference type="GO" id="GO:0019843">
    <property type="term" value="F:rRNA binding"/>
    <property type="evidence" value="ECO:0007669"/>
    <property type="project" value="UniProtKB-UniRule"/>
</dbReference>
<dbReference type="GO" id="GO:0003735">
    <property type="term" value="F:structural constituent of ribosome"/>
    <property type="evidence" value="ECO:0007669"/>
    <property type="project" value="InterPro"/>
</dbReference>
<dbReference type="GO" id="GO:0006412">
    <property type="term" value="P:translation"/>
    <property type="evidence" value="ECO:0007669"/>
    <property type="project" value="UniProtKB-UniRule"/>
</dbReference>
<dbReference type="CDD" id="cd00336">
    <property type="entry name" value="Ribosomal_L22"/>
    <property type="match status" value="1"/>
</dbReference>
<dbReference type="FunFam" id="3.90.470.10:FF:000001">
    <property type="entry name" value="50S ribosomal protein L22"/>
    <property type="match status" value="1"/>
</dbReference>
<dbReference type="Gene3D" id="3.90.470.10">
    <property type="entry name" value="Ribosomal protein L22/L17"/>
    <property type="match status" value="1"/>
</dbReference>
<dbReference type="HAMAP" id="MF_01331_B">
    <property type="entry name" value="Ribosomal_uL22_B"/>
    <property type="match status" value="1"/>
</dbReference>
<dbReference type="InterPro" id="IPR001063">
    <property type="entry name" value="Ribosomal_uL22"/>
</dbReference>
<dbReference type="InterPro" id="IPR005727">
    <property type="entry name" value="Ribosomal_uL22_bac/chlpt-type"/>
</dbReference>
<dbReference type="InterPro" id="IPR047867">
    <property type="entry name" value="Ribosomal_uL22_bac/org-type"/>
</dbReference>
<dbReference type="InterPro" id="IPR018260">
    <property type="entry name" value="Ribosomal_uL22_CS"/>
</dbReference>
<dbReference type="InterPro" id="IPR036394">
    <property type="entry name" value="Ribosomal_uL22_sf"/>
</dbReference>
<dbReference type="NCBIfam" id="TIGR01044">
    <property type="entry name" value="rplV_bact"/>
    <property type="match status" value="1"/>
</dbReference>
<dbReference type="PANTHER" id="PTHR13501">
    <property type="entry name" value="CHLOROPLAST 50S RIBOSOMAL PROTEIN L22-RELATED"/>
    <property type="match status" value="1"/>
</dbReference>
<dbReference type="PANTHER" id="PTHR13501:SF8">
    <property type="entry name" value="LARGE RIBOSOMAL SUBUNIT PROTEIN UL22M"/>
    <property type="match status" value="1"/>
</dbReference>
<dbReference type="Pfam" id="PF00237">
    <property type="entry name" value="Ribosomal_L22"/>
    <property type="match status" value="1"/>
</dbReference>
<dbReference type="SUPFAM" id="SSF54843">
    <property type="entry name" value="Ribosomal protein L22"/>
    <property type="match status" value="1"/>
</dbReference>
<dbReference type="PROSITE" id="PS00464">
    <property type="entry name" value="RIBOSOMAL_L22"/>
    <property type="match status" value="1"/>
</dbReference>
<organism>
    <name type="scientific">Xanthomonas oryzae pv. oryzae (strain PXO99A)</name>
    <dbReference type="NCBI Taxonomy" id="360094"/>
    <lineage>
        <taxon>Bacteria</taxon>
        <taxon>Pseudomonadati</taxon>
        <taxon>Pseudomonadota</taxon>
        <taxon>Gammaproteobacteria</taxon>
        <taxon>Lysobacterales</taxon>
        <taxon>Lysobacteraceae</taxon>
        <taxon>Xanthomonas</taxon>
    </lineage>
</organism>
<reference key="1">
    <citation type="journal article" date="2008" name="BMC Genomics">
        <title>Genome sequence and rapid evolution of the rice pathogen Xanthomonas oryzae pv. oryzae PXO99A.</title>
        <authorList>
            <person name="Salzberg S.L."/>
            <person name="Sommer D.D."/>
            <person name="Schatz M.C."/>
            <person name="Phillippy A.M."/>
            <person name="Rabinowicz P.D."/>
            <person name="Tsuge S."/>
            <person name="Furutani A."/>
            <person name="Ochiai H."/>
            <person name="Delcher A.L."/>
            <person name="Kelley D."/>
            <person name="Madupu R."/>
            <person name="Puiu D."/>
            <person name="Radune D."/>
            <person name="Shumway M."/>
            <person name="Trapnell C."/>
            <person name="Aparna G."/>
            <person name="Jha G."/>
            <person name="Pandey A."/>
            <person name="Patil P.B."/>
            <person name="Ishihara H."/>
            <person name="Meyer D.F."/>
            <person name="Szurek B."/>
            <person name="Verdier V."/>
            <person name="Koebnik R."/>
            <person name="Dow J.M."/>
            <person name="Ryan R.P."/>
            <person name="Hirata H."/>
            <person name="Tsuyumu S."/>
            <person name="Won Lee S."/>
            <person name="Seo Y.-S."/>
            <person name="Sriariyanum M."/>
            <person name="Ronald P.C."/>
            <person name="Sonti R.V."/>
            <person name="Van Sluys M.-A."/>
            <person name="Leach J.E."/>
            <person name="White F.F."/>
            <person name="Bogdanove A.J."/>
        </authorList>
    </citation>
    <scope>NUCLEOTIDE SEQUENCE [LARGE SCALE GENOMIC DNA]</scope>
    <source>
        <strain>PXO99A</strain>
    </source>
</reference>